<comment type="function">
    <text evidence="4 5">Involved in the biosynthesis of benzylisoquinoline alkaloids. Probably involved in papaverine biosynthesis since its transcripts are abundant only in cultivars with substantial papaverine accumulation. May catalyze the 3'-hydroxylation of (S)-coclaurine.</text>
</comment>
<comment type="cofactor">
    <cofactor evidence="1">
        <name>heme</name>
        <dbReference type="ChEBI" id="CHEBI:30413"/>
    </cofactor>
</comment>
<comment type="subcellular location">
    <subcellularLocation>
        <location evidence="2">Membrane</location>
        <topology evidence="2">Single-pass membrane protein</topology>
    </subcellularLocation>
</comment>
<comment type="similarity">
    <text evidence="3">Belongs to the cytochrome P450 family.</text>
</comment>
<organism evidence="7">
    <name type="scientific">Papaver somniferum</name>
    <name type="common">Opium poppy</name>
    <dbReference type="NCBI Taxonomy" id="3469"/>
    <lineage>
        <taxon>Eukaryota</taxon>
        <taxon>Viridiplantae</taxon>
        <taxon>Streptophyta</taxon>
        <taxon>Embryophyta</taxon>
        <taxon>Tracheophyta</taxon>
        <taxon>Spermatophyta</taxon>
        <taxon>Magnoliopsida</taxon>
        <taxon>Ranunculales</taxon>
        <taxon>Papaveraceae</taxon>
        <taxon>Papaveroideae</taxon>
        <taxon>Papaver</taxon>
    </lineage>
</organism>
<proteinExistence type="evidence at transcript level"/>
<sequence>MEIVTVALIAIVFTTFLYLIVRESSPNGLPPGPKPWPIVGNLLQLGEKPHSQFAQLAETYGDLFTLKLGTQTVVVASTPLAASEVLKAHDRTLCGRYVFQSFRVKNHVENSIVWNECNETWKKLRKVCRTQLFTQKMIENQAEVREIKTMEMVKYLKKNEGIEVKIVEVIFGTLVNMFGNLIFSQDIFKLGDESSGSLEMKQHIWRMLELGNSANPGDYVPLLGSLDLFGQRKDVADCLQGVYGVWGAMLKERRIAKRQINGDTKNDFVDVLLDSGLDDQQINSLLLDMFSAGTETTASTIEWALTELTKNPQVTADIRSELLSVVGKRAVKESDILNLPYLQAFVKETLRLHPPTPLLIPRRALETCQVLNYTIPKECQIMVNAWGIGRDPKTWTDPLKFSPDRFLNSSIDFKGNDFELIPFGAGRRICPGVPPGNSVY</sequence>
<dbReference type="EC" id="1.14.-.-" evidence="6"/>
<dbReference type="EMBL" id="JN185327">
    <property type="protein sequence ID" value="AFK73713.1"/>
    <property type="molecule type" value="mRNA"/>
</dbReference>
<dbReference type="SMR" id="I3V6B1"/>
<dbReference type="GO" id="GO:0016020">
    <property type="term" value="C:membrane"/>
    <property type="evidence" value="ECO:0007669"/>
    <property type="project" value="UniProtKB-SubCell"/>
</dbReference>
<dbReference type="GO" id="GO:0020037">
    <property type="term" value="F:heme binding"/>
    <property type="evidence" value="ECO:0007669"/>
    <property type="project" value="InterPro"/>
</dbReference>
<dbReference type="GO" id="GO:0005506">
    <property type="term" value="F:iron ion binding"/>
    <property type="evidence" value="ECO:0007669"/>
    <property type="project" value="InterPro"/>
</dbReference>
<dbReference type="GO" id="GO:0004497">
    <property type="term" value="F:monooxygenase activity"/>
    <property type="evidence" value="ECO:0007669"/>
    <property type="project" value="UniProtKB-KW"/>
</dbReference>
<dbReference type="GO" id="GO:0016705">
    <property type="term" value="F:oxidoreductase activity, acting on paired donors, with incorporation or reduction of molecular oxygen"/>
    <property type="evidence" value="ECO:0007669"/>
    <property type="project" value="InterPro"/>
</dbReference>
<dbReference type="GO" id="GO:0033075">
    <property type="term" value="P:isoquinoline alkaloid biosynthetic process"/>
    <property type="evidence" value="ECO:0007669"/>
    <property type="project" value="UniProtKB-ARBA"/>
</dbReference>
<dbReference type="CDD" id="cd11073">
    <property type="entry name" value="CYP76-like"/>
    <property type="match status" value="1"/>
</dbReference>
<dbReference type="Gene3D" id="1.10.630.10">
    <property type="entry name" value="Cytochrome P450"/>
    <property type="match status" value="1"/>
</dbReference>
<dbReference type="InterPro" id="IPR001128">
    <property type="entry name" value="Cyt_P450"/>
</dbReference>
<dbReference type="InterPro" id="IPR017972">
    <property type="entry name" value="Cyt_P450_CS"/>
</dbReference>
<dbReference type="InterPro" id="IPR002401">
    <property type="entry name" value="Cyt_P450_E_grp-I"/>
</dbReference>
<dbReference type="InterPro" id="IPR036396">
    <property type="entry name" value="Cyt_P450_sf"/>
</dbReference>
<dbReference type="PANTHER" id="PTHR47950:SF49">
    <property type="entry name" value="CYTOCHROME P450"/>
    <property type="match status" value="1"/>
</dbReference>
<dbReference type="PANTHER" id="PTHR47950">
    <property type="entry name" value="CYTOCHROME P450, FAMILY 76, SUBFAMILY C, POLYPEPTIDE 5-RELATED"/>
    <property type="match status" value="1"/>
</dbReference>
<dbReference type="Pfam" id="PF00067">
    <property type="entry name" value="p450"/>
    <property type="match status" value="1"/>
</dbReference>
<dbReference type="PRINTS" id="PR00463">
    <property type="entry name" value="EP450I"/>
</dbReference>
<dbReference type="PRINTS" id="PR00385">
    <property type="entry name" value="P450"/>
</dbReference>
<dbReference type="SUPFAM" id="SSF48264">
    <property type="entry name" value="Cytochrome P450"/>
    <property type="match status" value="1"/>
</dbReference>
<dbReference type="PROSITE" id="PS00086">
    <property type="entry name" value="CYTOCHROME_P450"/>
    <property type="match status" value="1"/>
</dbReference>
<accession>I3V6B1</accession>
<gene>
    <name evidence="6" type="primary">CYP80BX</name>
</gene>
<reference key="1">
    <citation type="journal article" date="2012" name="Plant Mol. Biol.">
        <title>Integration of deep transcript and targeted metabolite profiles for eight cultivars of opium poppy.</title>
        <authorList>
            <person name="Desgagne-Penix I."/>
            <person name="Farrow S.C."/>
            <person name="Cram D."/>
            <person name="Nowak J."/>
            <person name="Facchini P.J."/>
        </authorList>
    </citation>
    <scope>NUCLEOTIDE SEQUENCE [MRNA]</scope>
    <scope>FUNCTION</scope>
</reference>
<reference key="2">
    <citation type="journal article" date="2012" name="Plant J.">
        <title>Systematic silencing of benzylisoquinoline alkaloid biosynthetic genes reveals the major route to papaverine in opium poppy.</title>
        <authorList>
            <person name="Desgagne-Penix I."/>
            <person name="Facchini P.J."/>
        </authorList>
    </citation>
    <scope>FUNCTION</scope>
</reference>
<protein>
    <recommendedName>
        <fullName evidence="6">(S)-N-methylcoclaurine 3'-hydroxylase-like protein</fullName>
        <ecNumber evidence="6">1.14.-.-</ecNumber>
    </recommendedName>
    <alternativeName>
        <fullName evidence="6">Cytochrome P450 80BX</fullName>
    </alternativeName>
</protein>
<evidence type="ECO:0000250" key="1">
    <source>
        <dbReference type="UniProtKB" id="P04798"/>
    </source>
</evidence>
<evidence type="ECO:0000255" key="2"/>
<evidence type="ECO:0000255" key="3">
    <source>
        <dbReference type="RuleBase" id="RU000461"/>
    </source>
</evidence>
<evidence type="ECO:0000269" key="4">
    <source>
    </source>
</evidence>
<evidence type="ECO:0000269" key="5">
    <source>
    </source>
</evidence>
<evidence type="ECO:0000305" key="6"/>
<evidence type="ECO:0000312" key="7">
    <source>
        <dbReference type="EMBL" id="AFK73713.1"/>
    </source>
</evidence>
<name>C80BX_PAPSO</name>
<keyword id="KW-0017">Alkaloid metabolism</keyword>
<keyword id="KW-0349">Heme</keyword>
<keyword id="KW-0408">Iron</keyword>
<keyword id="KW-0472">Membrane</keyword>
<keyword id="KW-0479">Metal-binding</keyword>
<keyword id="KW-0503">Monooxygenase</keyword>
<keyword id="KW-0560">Oxidoreductase</keyword>
<keyword id="KW-0735">Signal-anchor</keyword>
<keyword id="KW-0812">Transmembrane</keyword>
<keyword id="KW-1133">Transmembrane helix</keyword>
<feature type="chain" id="PRO_0000433983" description="(S)-N-methylcoclaurine 3'-hydroxylase-like protein">
    <location>
        <begin position="1"/>
        <end position="440"/>
    </location>
</feature>
<feature type="transmembrane region" description="Helical; Signal-anchor for type II membrane protein" evidence="2">
    <location>
        <begin position="2"/>
        <end position="21"/>
    </location>
</feature>
<feature type="binding site" description="axial binding residue" evidence="1">
    <location>
        <position position="430"/>
    </location>
    <ligand>
        <name>heme</name>
        <dbReference type="ChEBI" id="CHEBI:30413"/>
    </ligand>
    <ligandPart>
        <name>Fe</name>
        <dbReference type="ChEBI" id="CHEBI:18248"/>
    </ligandPart>
</feature>